<proteinExistence type="inferred from homology"/>
<evidence type="ECO:0000250" key="1">
    <source>
        <dbReference type="UniProtKB" id="P91430"/>
    </source>
</evidence>
<evidence type="ECO:0000250" key="2">
    <source>
        <dbReference type="UniProtKB" id="Q9GZZ9"/>
    </source>
</evidence>
<evidence type="ECO:0000256" key="3">
    <source>
        <dbReference type="SAM" id="MobiDB-lite"/>
    </source>
</evidence>
<evidence type="ECO:0000305" key="4"/>
<evidence type="ECO:0000312" key="5">
    <source>
        <dbReference type="WormBase" id="CBG11977"/>
    </source>
</evidence>
<sequence length="432" mass="48009">MTESDVAESIGDIVSRLNNALDDLETKKNQTPSVLKGPTVSQERPSAPYRQKIEKLSAEVVDSNPYSRLMALQRMGIVRDYEQIRDKTVAVVGVGGVGSVVAEMLTRCGIGKLILFDYDKVEIANMNRLFYQPNQAGLSKVEAARDTLIHVNPDVQIEVHNFNITTMDNFDVFVGRIRNGSLKSGKIDLVLSCVDNFEARMAVNMACNEENQIWMESGVSENAVSGHIQYIEPGKTACFACVPPLVVASNIDERTLKREGVCAASLPTTMAVVAGFLVMNTLKYLLNFGEVSHYVGYNALADFFPRESIKPNPSCDDRHCQIRQKEYEEKISSEPITLDIQAPEDEPIIHEENDWGIEVVDSDTTEAPSSSAATEVAPGLKFAYEPTQTPKKNSSDNLKLSPSQAVTKEWMENIRDALLEEDRLKKEQNKRK</sequence>
<accession>A8XEQ8</accession>
<dbReference type="EMBL" id="HE601540">
    <property type="protein sequence ID" value="CAP31026.2"/>
    <property type="molecule type" value="Genomic_DNA"/>
</dbReference>
<dbReference type="SMR" id="A8XEQ8"/>
<dbReference type="FunCoup" id="A8XEQ8">
    <property type="interactions" value="3166"/>
</dbReference>
<dbReference type="STRING" id="6238.A8XEQ8"/>
<dbReference type="EnsemblMetazoa" id="CBG11977.1">
    <property type="protein sequence ID" value="CBG11977.1"/>
    <property type="gene ID" value="WBGene00032994"/>
</dbReference>
<dbReference type="WormBase" id="CBG11977">
    <property type="protein sequence ID" value="CBP25964"/>
    <property type="gene ID" value="WBGene00032994"/>
    <property type="gene designation" value="Cbr-uba-5"/>
</dbReference>
<dbReference type="eggNOG" id="KOG2336">
    <property type="taxonomic scope" value="Eukaryota"/>
</dbReference>
<dbReference type="HOGENOM" id="CLU_013325_0_1_1"/>
<dbReference type="InParanoid" id="A8XEQ8"/>
<dbReference type="OMA" id="MNIVKDY"/>
<dbReference type="Proteomes" id="UP000008549">
    <property type="component" value="Unassembled WGS sequence"/>
</dbReference>
<dbReference type="GO" id="GO:0005737">
    <property type="term" value="C:cytoplasm"/>
    <property type="evidence" value="ECO:0000318"/>
    <property type="project" value="GO_Central"/>
</dbReference>
<dbReference type="GO" id="GO:0005829">
    <property type="term" value="C:cytosol"/>
    <property type="evidence" value="ECO:0000318"/>
    <property type="project" value="GO_Central"/>
</dbReference>
<dbReference type="GO" id="GO:0005524">
    <property type="term" value="F:ATP binding"/>
    <property type="evidence" value="ECO:0007669"/>
    <property type="project" value="UniProtKB-KW"/>
</dbReference>
<dbReference type="GO" id="GO:0046872">
    <property type="term" value="F:metal ion binding"/>
    <property type="evidence" value="ECO:0007669"/>
    <property type="project" value="UniProtKB-KW"/>
</dbReference>
<dbReference type="GO" id="GO:0031624">
    <property type="term" value="F:ubiquitin conjugating enzyme binding"/>
    <property type="evidence" value="ECO:0007669"/>
    <property type="project" value="EnsemblMetazoa"/>
</dbReference>
<dbReference type="GO" id="GO:0071566">
    <property type="term" value="F:UFM1 activating enzyme activity"/>
    <property type="evidence" value="ECO:0000318"/>
    <property type="project" value="GO_Central"/>
</dbReference>
<dbReference type="GO" id="GO:0071569">
    <property type="term" value="P:protein ufmylation"/>
    <property type="evidence" value="ECO:0000318"/>
    <property type="project" value="GO_Central"/>
</dbReference>
<dbReference type="GO" id="GO:0034976">
    <property type="term" value="P:response to endoplasmic reticulum stress"/>
    <property type="evidence" value="ECO:0007669"/>
    <property type="project" value="EnsemblMetazoa"/>
</dbReference>
<dbReference type="CDD" id="cd00757">
    <property type="entry name" value="ThiF_MoeB_HesA_family"/>
    <property type="match status" value="1"/>
</dbReference>
<dbReference type="FunFam" id="3.40.50.720:FF:000066">
    <property type="entry name" value="Putative ubiquitin-like modifier-activating enzyme 5"/>
    <property type="match status" value="1"/>
</dbReference>
<dbReference type="Gene3D" id="3.40.50.720">
    <property type="entry name" value="NAD(P)-binding Rossmann-like Domain"/>
    <property type="match status" value="1"/>
</dbReference>
<dbReference type="InterPro" id="IPR029752">
    <property type="entry name" value="D-isomer_DH_CS1"/>
</dbReference>
<dbReference type="InterPro" id="IPR045886">
    <property type="entry name" value="ThiF/MoeB/HesA"/>
</dbReference>
<dbReference type="InterPro" id="IPR000594">
    <property type="entry name" value="ThiF_NAD_FAD-bd"/>
</dbReference>
<dbReference type="InterPro" id="IPR035985">
    <property type="entry name" value="Ubiquitin-activating_enz"/>
</dbReference>
<dbReference type="PANTHER" id="PTHR10953">
    <property type="entry name" value="UBIQUITIN-ACTIVATING ENZYME E1"/>
    <property type="match status" value="1"/>
</dbReference>
<dbReference type="PANTHER" id="PTHR10953:SF9">
    <property type="entry name" value="UBIQUITIN-LIKE MODIFIER-ACTIVATING ENZYME 5"/>
    <property type="match status" value="1"/>
</dbReference>
<dbReference type="Pfam" id="PF00899">
    <property type="entry name" value="ThiF"/>
    <property type="match status" value="1"/>
</dbReference>
<dbReference type="SUPFAM" id="SSF69572">
    <property type="entry name" value="Activating enzymes of the ubiquitin-like proteins"/>
    <property type="match status" value="1"/>
</dbReference>
<keyword id="KW-0067">ATP-binding</keyword>
<keyword id="KW-0479">Metal-binding</keyword>
<keyword id="KW-0547">Nucleotide-binding</keyword>
<keyword id="KW-1185">Reference proteome</keyword>
<keyword id="KW-0833">Ubl conjugation pathway</keyword>
<keyword id="KW-0862">Zinc</keyword>
<feature type="chain" id="PRO_0000391936" description="Ubiquitin-like modifier-activating enzyme 5">
    <location>
        <begin position="1"/>
        <end position="432"/>
    </location>
</feature>
<feature type="region of interest" description="Disordered" evidence="3">
    <location>
        <begin position="25"/>
        <end position="47"/>
    </location>
</feature>
<feature type="region of interest" description="Disordered" evidence="3">
    <location>
        <begin position="363"/>
        <end position="406"/>
    </location>
</feature>
<feature type="compositionally biased region" description="Polar residues" evidence="3">
    <location>
        <begin position="29"/>
        <end position="44"/>
    </location>
</feature>
<feature type="compositionally biased region" description="Polar residues" evidence="3">
    <location>
        <begin position="386"/>
        <end position="406"/>
    </location>
</feature>
<feature type="active site" description="Glycyl thioester intermediate" evidence="2">
    <location>
        <position position="262"/>
    </location>
</feature>
<feature type="binding site" evidence="2">
    <location>
        <position position="96"/>
    </location>
    <ligand>
        <name>ATP</name>
        <dbReference type="ChEBI" id="CHEBI:30616"/>
    </ligand>
</feature>
<feature type="binding site" evidence="2">
    <location>
        <position position="117"/>
    </location>
    <ligand>
        <name>ATP</name>
        <dbReference type="ChEBI" id="CHEBI:30616"/>
    </ligand>
</feature>
<feature type="binding site" evidence="2">
    <location>
        <position position="140"/>
    </location>
    <ligand>
        <name>ATP</name>
        <dbReference type="ChEBI" id="CHEBI:30616"/>
    </ligand>
</feature>
<feature type="binding site" evidence="2">
    <location>
        <position position="163"/>
    </location>
    <ligand>
        <name>ATP</name>
        <dbReference type="ChEBI" id="CHEBI:30616"/>
    </ligand>
</feature>
<feature type="binding site" evidence="2">
    <location>
        <position position="196"/>
    </location>
    <ligand>
        <name>ATP</name>
        <dbReference type="ChEBI" id="CHEBI:30616"/>
    </ligand>
</feature>
<feature type="binding site" evidence="2">
    <location>
        <position position="238"/>
    </location>
    <ligand>
        <name>Zn(2+)</name>
        <dbReference type="ChEBI" id="CHEBI:29105"/>
    </ligand>
</feature>
<feature type="binding site" evidence="2">
    <location>
        <position position="241"/>
    </location>
    <ligand>
        <name>Zn(2+)</name>
        <dbReference type="ChEBI" id="CHEBI:29105"/>
    </ligand>
</feature>
<feature type="binding site" evidence="2">
    <location>
        <position position="315"/>
    </location>
    <ligand>
        <name>Zn(2+)</name>
        <dbReference type="ChEBI" id="CHEBI:29105"/>
    </ligand>
</feature>
<feature type="binding site" evidence="2">
    <location>
        <position position="320"/>
    </location>
    <ligand>
        <name>Zn(2+)</name>
        <dbReference type="ChEBI" id="CHEBI:29105"/>
    </ligand>
</feature>
<comment type="function">
    <text evidence="1">E1-like enzyme which activates ufm-1. Required for interaction between ufm-1 and ufc-1.</text>
</comment>
<comment type="subunit">
    <text evidence="1">Interacts with ufc-1.</text>
</comment>
<comment type="similarity">
    <text evidence="4">Belongs to the ubiquitin-activating E1 family. UBA5 subfamily.</text>
</comment>
<name>UBA5_CAEBR</name>
<reference key="1">
    <citation type="journal article" date="2003" name="PLoS Biol.">
        <title>The genome sequence of Caenorhabditis briggsae: a platform for comparative genomics.</title>
        <authorList>
            <person name="Stein L.D."/>
            <person name="Bao Z."/>
            <person name="Blasiar D."/>
            <person name="Blumenthal T."/>
            <person name="Brent M.R."/>
            <person name="Chen N."/>
            <person name="Chinwalla A."/>
            <person name="Clarke L."/>
            <person name="Clee C."/>
            <person name="Coghlan A."/>
            <person name="Coulson A."/>
            <person name="D'Eustachio P."/>
            <person name="Fitch D.H.A."/>
            <person name="Fulton L.A."/>
            <person name="Fulton R.E."/>
            <person name="Griffiths-Jones S."/>
            <person name="Harris T.W."/>
            <person name="Hillier L.W."/>
            <person name="Kamath R."/>
            <person name="Kuwabara P.E."/>
            <person name="Mardis E.R."/>
            <person name="Marra M.A."/>
            <person name="Miner T.L."/>
            <person name="Minx P."/>
            <person name="Mullikin J.C."/>
            <person name="Plumb R.W."/>
            <person name="Rogers J."/>
            <person name="Schein J.E."/>
            <person name="Sohrmann M."/>
            <person name="Spieth J."/>
            <person name="Stajich J.E."/>
            <person name="Wei C."/>
            <person name="Willey D."/>
            <person name="Wilson R.K."/>
            <person name="Durbin R.M."/>
            <person name="Waterston R.H."/>
        </authorList>
    </citation>
    <scope>NUCLEOTIDE SEQUENCE [LARGE SCALE GENOMIC DNA]</scope>
    <source>
        <strain>AF16</strain>
    </source>
</reference>
<gene>
    <name evidence="5" type="primary">uba-5</name>
    <name evidence="5" type="ORF">CBG11977</name>
</gene>
<protein>
    <recommendedName>
        <fullName>Ubiquitin-like modifier-activating enzyme 5</fullName>
        <shortName>Ubiquitin-activating enzyme 5</shortName>
    </recommendedName>
</protein>
<organism>
    <name type="scientific">Caenorhabditis briggsae</name>
    <dbReference type="NCBI Taxonomy" id="6238"/>
    <lineage>
        <taxon>Eukaryota</taxon>
        <taxon>Metazoa</taxon>
        <taxon>Ecdysozoa</taxon>
        <taxon>Nematoda</taxon>
        <taxon>Chromadorea</taxon>
        <taxon>Rhabditida</taxon>
        <taxon>Rhabditina</taxon>
        <taxon>Rhabditomorpha</taxon>
        <taxon>Rhabditoidea</taxon>
        <taxon>Rhabditidae</taxon>
        <taxon>Peloderinae</taxon>
        <taxon>Caenorhabditis</taxon>
    </lineage>
</organism>